<name>GFCR1_METBF</name>
<gene>
    <name evidence="1" type="primary">gfcR1</name>
    <name type="ordered locus">Mbar_A3471</name>
</gene>
<sequence length="204" mass="21912">MKNIEDLIQKAVELQSNGLVTGQIADELNVSRETVTWLLTRSKKEVAAPAPKDISVNWSNIGKSATRLHYISLALCDMVLETLEETNAEVDVVVGVAASGIPLASMMANELGADFALYHSRKGQDVVQPGQKGTISRNFGGVAGKNCVIVDDVITTGSTTMEVIEQLREMGAKPRAVAVLVDKKGADMIANVPIRSLVRIVRLD</sequence>
<reference key="1">
    <citation type="journal article" date="2006" name="J. Bacteriol.">
        <title>The Methanosarcina barkeri genome: comparative analysis with Methanosarcina acetivorans and Methanosarcina mazei reveals extensive rearrangement within methanosarcinal genomes.</title>
        <authorList>
            <person name="Maeder D.L."/>
            <person name="Anderson I."/>
            <person name="Brettin T.S."/>
            <person name="Bruce D.C."/>
            <person name="Gilna P."/>
            <person name="Han C.S."/>
            <person name="Lapidus A."/>
            <person name="Metcalf W.W."/>
            <person name="Saunders E."/>
            <person name="Tapia R."/>
            <person name="Sowers K.R."/>
        </authorList>
    </citation>
    <scope>NUCLEOTIDE SEQUENCE [LARGE SCALE GENOMIC DNA]</scope>
    <source>
        <strain>Fusaro / DSM 804</strain>
    </source>
</reference>
<organism>
    <name type="scientific">Methanosarcina barkeri (strain Fusaro / DSM 804)</name>
    <dbReference type="NCBI Taxonomy" id="269797"/>
    <lineage>
        <taxon>Archaea</taxon>
        <taxon>Methanobacteriati</taxon>
        <taxon>Methanobacteriota</taxon>
        <taxon>Stenosarchaea group</taxon>
        <taxon>Methanomicrobia</taxon>
        <taxon>Methanosarcinales</taxon>
        <taxon>Methanosarcinaceae</taxon>
        <taxon>Methanosarcina</taxon>
    </lineage>
</organism>
<protein>
    <recommendedName>
        <fullName evidence="1">Transcriptional regulator GfcR 1</fullName>
    </recommendedName>
</protein>
<dbReference type="EMBL" id="CP000099">
    <property type="protein sequence ID" value="AAZ72344.1"/>
    <property type="molecule type" value="Genomic_DNA"/>
</dbReference>
<dbReference type="SMR" id="Q465U8"/>
<dbReference type="STRING" id="269797.Mbar_A3471"/>
<dbReference type="PaxDb" id="269797-Mbar_A3471"/>
<dbReference type="KEGG" id="mba:Mbar_A3471"/>
<dbReference type="eggNOG" id="arCOG00028">
    <property type="taxonomic scope" value="Archaea"/>
</dbReference>
<dbReference type="HOGENOM" id="CLU_111001_0_0_2"/>
<dbReference type="OrthoDB" id="68893at2157"/>
<dbReference type="GO" id="GO:0003677">
    <property type="term" value="F:DNA binding"/>
    <property type="evidence" value="ECO:0007669"/>
    <property type="project" value="UniProtKB-UniRule"/>
</dbReference>
<dbReference type="GO" id="GO:0004588">
    <property type="term" value="F:orotate phosphoribosyltransferase activity"/>
    <property type="evidence" value="ECO:0007669"/>
    <property type="project" value="TreeGrafter"/>
</dbReference>
<dbReference type="GO" id="GO:0019856">
    <property type="term" value="P:pyrimidine nucleobase biosynthetic process"/>
    <property type="evidence" value="ECO:0007669"/>
    <property type="project" value="TreeGrafter"/>
</dbReference>
<dbReference type="GO" id="GO:0010468">
    <property type="term" value="P:regulation of gene expression"/>
    <property type="evidence" value="ECO:0007669"/>
    <property type="project" value="UniProtKB-UniRule"/>
</dbReference>
<dbReference type="GO" id="GO:0006222">
    <property type="term" value="P:UMP biosynthetic process"/>
    <property type="evidence" value="ECO:0007669"/>
    <property type="project" value="TreeGrafter"/>
</dbReference>
<dbReference type="CDD" id="cd06223">
    <property type="entry name" value="PRTases_typeI"/>
    <property type="match status" value="1"/>
</dbReference>
<dbReference type="Gene3D" id="3.40.50.2020">
    <property type="match status" value="1"/>
</dbReference>
<dbReference type="HAMAP" id="MF_01214">
    <property type="entry name" value="GfcR"/>
    <property type="match status" value="1"/>
</dbReference>
<dbReference type="InterPro" id="IPR022854">
    <property type="entry name" value="GfcR-like"/>
</dbReference>
<dbReference type="InterPro" id="IPR000836">
    <property type="entry name" value="PRibTrfase_dom"/>
</dbReference>
<dbReference type="InterPro" id="IPR029057">
    <property type="entry name" value="PRTase-like"/>
</dbReference>
<dbReference type="NCBIfam" id="NF002620">
    <property type="entry name" value="PRK02277.1"/>
    <property type="match status" value="1"/>
</dbReference>
<dbReference type="PANTHER" id="PTHR19278">
    <property type="entry name" value="OROTATE PHOSPHORIBOSYLTRANSFERASE"/>
    <property type="match status" value="1"/>
</dbReference>
<dbReference type="PANTHER" id="PTHR19278:SF41">
    <property type="entry name" value="PYRE-LIKE PROTEIN"/>
    <property type="match status" value="1"/>
</dbReference>
<dbReference type="Pfam" id="PF00156">
    <property type="entry name" value="Pribosyltran"/>
    <property type="match status" value="1"/>
</dbReference>
<dbReference type="SUPFAM" id="SSF53271">
    <property type="entry name" value="PRTase-like"/>
    <property type="match status" value="1"/>
</dbReference>
<dbReference type="PROSITE" id="PS00103">
    <property type="entry name" value="PUR_PYR_PR_TRANSFER"/>
    <property type="match status" value="1"/>
</dbReference>
<keyword id="KW-0238">DNA-binding</keyword>
<keyword id="KW-0804">Transcription</keyword>
<keyword id="KW-0805">Transcription regulation</keyword>
<accession>Q465U8</accession>
<proteinExistence type="inferred from homology"/>
<feature type="chain" id="PRO_0000298902" description="Transcriptional regulator GfcR 1">
    <location>
        <begin position="1"/>
        <end position="204"/>
    </location>
</feature>
<evidence type="ECO:0000255" key="1">
    <source>
        <dbReference type="HAMAP-Rule" id="MF_01214"/>
    </source>
</evidence>
<comment type="domain">
    <text evidence="1">Contains an N-terminal DNA-binding winged helix-turn-helix domain and a C-terminal regulatory domain (or effector binding domain) resembling phosphoribosyltransferase (PRT) domain.</text>
</comment>
<comment type="similarity">
    <text evidence="1">Belongs to the purine/pyrimidine phosphoribosyltransferase family. GfcR subfamily.</text>
</comment>